<organism>
    <name type="scientific">Equine herpesvirus 2 (strain 86/87)</name>
    <name type="common">EHV-2</name>
    <dbReference type="NCBI Taxonomy" id="82831"/>
    <lineage>
        <taxon>Viruses</taxon>
        <taxon>Duplodnaviria</taxon>
        <taxon>Heunggongvirae</taxon>
        <taxon>Peploviricota</taxon>
        <taxon>Herviviricetes</taxon>
        <taxon>Herpesvirales</taxon>
        <taxon>Orthoherpesviridae</taxon>
        <taxon>Gammaherpesvirinae</taxon>
        <taxon>Percavirus</taxon>
        <taxon>Percavirus equidgamma2</taxon>
        <taxon>Equid gammaherpesvirus 2</taxon>
    </lineage>
</organism>
<feature type="signal peptide" evidence="1">
    <location>
        <begin position="1"/>
        <end position="20"/>
    </location>
</feature>
<feature type="chain" id="PRO_0000405991" description="SUSHI domain-containing protein E3">
    <location>
        <begin position="21"/>
        <end position="174"/>
    </location>
</feature>
<feature type="transmembrane region" description="Helical" evidence="1">
    <location>
        <begin position="145"/>
        <end position="165"/>
    </location>
</feature>
<feature type="domain" description="Sushi" evidence="2">
    <location>
        <begin position="35"/>
        <end position="97"/>
    </location>
</feature>
<feature type="region of interest" description="Disordered" evidence="3">
    <location>
        <begin position="108"/>
        <end position="133"/>
    </location>
</feature>
<feature type="compositionally biased region" description="Low complexity" evidence="3">
    <location>
        <begin position="108"/>
        <end position="127"/>
    </location>
</feature>
<feature type="disulfide bond" evidence="2">
    <location>
        <begin position="37"/>
        <end position="78"/>
    </location>
</feature>
<feature type="disulfide bond" evidence="2">
    <location>
        <begin position="64"/>
        <end position="95"/>
    </location>
</feature>
<evidence type="ECO:0000255" key="1"/>
<evidence type="ECO:0000255" key="2">
    <source>
        <dbReference type="PROSITE-ProRule" id="PRU00302"/>
    </source>
</evidence>
<evidence type="ECO:0000256" key="3">
    <source>
        <dbReference type="SAM" id="MobiDB-lite"/>
    </source>
</evidence>
<evidence type="ECO:0000305" key="4"/>
<name>VGE3_EHV2</name>
<organismHost>
    <name type="scientific">Equus caballus</name>
    <name type="common">Horse</name>
    <dbReference type="NCBI Taxonomy" id="9796"/>
</organismHost>
<reference key="1">
    <citation type="journal article" date="1995" name="J. Mol. Biol.">
        <title>The DNA sequence of equine herpesvirus 2.</title>
        <authorList>
            <person name="Telford E.A.R."/>
            <person name="Watson M.S."/>
            <person name="Aird H.C."/>
            <person name="Perry J."/>
            <person name="Davison A.J."/>
        </authorList>
    </citation>
    <scope>NUCLEOTIDE SEQUENCE [LARGE SCALE GENOMIC DNA]</scope>
</reference>
<accession>Q66608</accession>
<gene>
    <name type="primary">E3</name>
</gene>
<comment type="subcellular location">
    <subcellularLocation>
        <location evidence="4">Host membrane</location>
        <topology evidence="4">Single-pass membrane protein</topology>
    </subcellularLocation>
</comment>
<dbReference type="EMBL" id="U20824">
    <property type="protein sequence ID" value="AAC13790.1"/>
    <property type="molecule type" value="Genomic_DNA"/>
</dbReference>
<dbReference type="PIR" id="S55597">
    <property type="entry name" value="S55597"/>
</dbReference>
<dbReference type="RefSeq" id="NP_042599.1">
    <property type="nucleotide sequence ID" value="NC_001650.2"/>
</dbReference>
<dbReference type="SMR" id="Q66608"/>
<dbReference type="GeneID" id="1461071"/>
<dbReference type="KEGG" id="vg:1461071"/>
<dbReference type="Proteomes" id="UP000007083">
    <property type="component" value="Segment"/>
</dbReference>
<dbReference type="GO" id="GO:0033644">
    <property type="term" value="C:host cell membrane"/>
    <property type="evidence" value="ECO:0007669"/>
    <property type="project" value="UniProtKB-SubCell"/>
</dbReference>
<dbReference type="GO" id="GO:0016020">
    <property type="term" value="C:membrane"/>
    <property type="evidence" value="ECO:0007669"/>
    <property type="project" value="UniProtKB-KW"/>
</dbReference>
<dbReference type="CDD" id="cd00033">
    <property type="entry name" value="CCP"/>
    <property type="match status" value="1"/>
</dbReference>
<dbReference type="Gene3D" id="2.10.70.10">
    <property type="entry name" value="Complement Module, domain 1"/>
    <property type="match status" value="1"/>
</dbReference>
<dbReference type="InterPro" id="IPR035976">
    <property type="entry name" value="Sushi/SCR/CCP_sf"/>
</dbReference>
<dbReference type="InterPro" id="IPR000436">
    <property type="entry name" value="Sushi_SCR_CCP_dom"/>
</dbReference>
<dbReference type="SMART" id="SM00032">
    <property type="entry name" value="CCP"/>
    <property type="match status" value="1"/>
</dbReference>
<dbReference type="SUPFAM" id="SSF57535">
    <property type="entry name" value="Complement control module/SCR domain"/>
    <property type="match status" value="1"/>
</dbReference>
<dbReference type="PROSITE" id="PS50923">
    <property type="entry name" value="SUSHI"/>
    <property type="match status" value="1"/>
</dbReference>
<proteinExistence type="inferred from homology"/>
<keyword id="KW-1015">Disulfide bond</keyword>
<keyword id="KW-1043">Host membrane</keyword>
<keyword id="KW-0472">Membrane</keyword>
<keyword id="KW-1185">Reference proteome</keyword>
<keyword id="KW-0732">Signal</keyword>
<keyword id="KW-0768">Sushi</keyword>
<keyword id="KW-0812">Transmembrane</keyword>
<keyword id="KW-1133">Transmembrane helix</keyword>
<protein>
    <recommendedName>
        <fullName>SUSHI domain-containing protein E3</fullName>
    </recommendedName>
</protein>
<sequence>MATEVQFACALVVLLGCGYAGTPTPSKSTLIYNSQNCTTYPSIENGQSSLYYNGSWFIRYEFNCSSGYELQGWPYTTCIFWPKNGTIWTNGPPSCVKLNITTTLMPTSTSTTPVTTGTFPDPQNTTHPTHHTVKPTRRPINLLRFGYTPWAIITLVVIILLVVWIVNCCMGPMF</sequence>